<accession>B5EJC7</accession>
<evidence type="ECO:0000255" key="1">
    <source>
        <dbReference type="HAMAP-Rule" id="MF_00340"/>
    </source>
</evidence>
<evidence type="ECO:0000305" key="2"/>
<reference key="1">
    <citation type="submission" date="2008-08" db="EMBL/GenBank/DDBJ databases">
        <title>Complete sequence of Acidithiobacillus ferrooxidans ATCC 53993.</title>
        <authorList>
            <person name="Lucas S."/>
            <person name="Copeland A."/>
            <person name="Lapidus A."/>
            <person name="Glavina del Rio T."/>
            <person name="Dalin E."/>
            <person name="Tice H."/>
            <person name="Bruce D."/>
            <person name="Goodwin L."/>
            <person name="Pitluck S."/>
            <person name="Sims D."/>
            <person name="Brettin T."/>
            <person name="Detter J.C."/>
            <person name="Han C."/>
            <person name="Kuske C.R."/>
            <person name="Larimer F."/>
            <person name="Land M."/>
            <person name="Hauser L."/>
            <person name="Kyrpides N."/>
            <person name="Lykidis A."/>
            <person name="Borole A.P."/>
        </authorList>
    </citation>
    <scope>NUCLEOTIDE SEQUENCE [LARGE SCALE GENOMIC DNA]</scope>
    <source>
        <strain>ATCC 53993 / BNL-5-31</strain>
    </source>
</reference>
<organism>
    <name type="scientific">Acidithiobacillus ferrooxidans (strain ATCC 53993 / BNL-5-31)</name>
    <name type="common">Leptospirillum ferrooxidans (ATCC 53993)</name>
    <dbReference type="NCBI Taxonomy" id="380394"/>
    <lineage>
        <taxon>Bacteria</taxon>
        <taxon>Pseudomonadati</taxon>
        <taxon>Pseudomonadota</taxon>
        <taxon>Acidithiobacillia</taxon>
        <taxon>Acidithiobacillales</taxon>
        <taxon>Acidithiobacillaceae</taxon>
        <taxon>Acidithiobacillus</taxon>
    </lineage>
</organism>
<name>RL32_ACIF5</name>
<sequence>MAVPQSKTSRSRRDMRRAHDFLVTVNRSVCANCGAAKLPHHVCPECGFYKGREIVKKAVEA</sequence>
<gene>
    <name evidence="1" type="primary">rpmF</name>
    <name type="ordered locus">Lferr_1579</name>
</gene>
<proteinExistence type="inferred from homology"/>
<protein>
    <recommendedName>
        <fullName evidence="1">Large ribosomal subunit protein bL32</fullName>
    </recommendedName>
    <alternativeName>
        <fullName evidence="2">50S ribosomal protein L32</fullName>
    </alternativeName>
</protein>
<keyword id="KW-0687">Ribonucleoprotein</keyword>
<keyword id="KW-0689">Ribosomal protein</keyword>
<feature type="chain" id="PRO_1000120077" description="Large ribosomal subunit protein bL32">
    <location>
        <begin position="1"/>
        <end position="61"/>
    </location>
</feature>
<dbReference type="EMBL" id="CP001132">
    <property type="protein sequence ID" value="ACH83801.1"/>
    <property type="molecule type" value="Genomic_DNA"/>
</dbReference>
<dbReference type="RefSeq" id="WP_012536832.1">
    <property type="nucleotide sequence ID" value="NC_011206.1"/>
</dbReference>
<dbReference type="SMR" id="B5EJC7"/>
<dbReference type="GeneID" id="65281059"/>
<dbReference type="KEGG" id="afe:Lferr_1579"/>
<dbReference type="eggNOG" id="COG0333">
    <property type="taxonomic scope" value="Bacteria"/>
</dbReference>
<dbReference type="HOGENOM" id="CLU_129084_1_3_6"/>
<dbReference type="GO" id="GO:0015934">
    <property type="term" value="C:large ribosomal subunit"/>
    <property type="evidence" value="ECO:0007669"/>
    <property type="project" value="InterPro"/>
</dbReference>
<dbReference type="GO" id="GO:0003735">
    <property type="term" value="F:structural constituent of ribosome"/>
    <property type="evidence" value="ECO:0007669"/>
    <property type="project" value="InterPro"/>
</dbReference>
<dbReference type="GO" id="GO:0006412">
    <property type="term" value="P:translation"/>
    <property type="evidence" value="ECO:0007669"/>
    <property type="project" value="UniProtKB-UniRule"/>
</dbReference>
<dbReference type="Gene3D" id="1.20.5.640">
    <property type="entry name" value="Single helix bin"/>
    <property type="match status" value="1"/>
</dbReference>
<dbReference type="HAMAP" id="MF_00340">
    <property type="entry name" value="Ribosomal_bL32"/>
    <property type="match status" value="1"/>
</dbReference>
<dbReference type="InterPro" id="IPR002677">
    <property type="entry name" value="Ribosomal_bL32"/>
</dbReference>
<dbReference type="InterPro" id="IPR044957">
    <property type="entry name" value="Ribosomal_bL32_bact"/>
</dbReference>
<dbReference type="InterPro" id="IPR011332">
    <property type="entry name" value="Ribosomal_zn-bd"/>
</dbReference>
<dbReference type="NCBIfam" id="TIGR01031">
    <property type="entry name" value="rpmF_bact"/>
    <property type="match status" value="1"/>
</dbReference>
<dbReference type="PANTHER" id="PTHR35534">
    <property type="entry name" value="50S RIBOSOMAL PROTEIN L32"/>
    <property type="match status" value="1"/>
</dbReference>
<dbReference type="PANTHER" id="PTHR35534:SF1">
    <property type="entry name" value="LARGE RIBOSOMAL SUBUNIT PROTEIN BL32"/>
    <property type="match status" value="1"/>
</dbReference>
<dbReference type="Pfam" id="PF01783">
    <property type="entry name" value="Ribosomal_L32p"/>
    <property type="match status" value="1"/>
</dbReference>
<dbReference type="SUPFAM" id="SSF57829">
    <property type="entry name" value="Zn-binding ribosomal proteins"/>
    <property type="match status" value="1"/>
</dbReference>
<comment type="similarity">
    <text evidence="1">Belongs to the bacterial ribosomal protein bL32 family.</text>
</comment>